<protein>
    <recommendedName>
        <fullName>Peroxiredoxin-6</fullName>
        <ecNumber evidence="4">1.11.1.27</ecNumber>
    </recommendedName>
    <alternativeName>
        <fullName>1-Cys peroxiredoxin</fullName>
        <shortName>1-Cys PRX</shortName>
    </alternativeName>
    <alternativeName>
        <fullName>Acidic calcium-independent phospholipase A2</fullName>
        <shortName>aiPLA2</shortName>
        <ecNumber evidence="5 9">3.1.1.4</ecNumber>
    </alternativeName>
    <alternativeName>
        <fullName>Antioxidant protein 2</fullName>
    </alternativeName>
    <alternativeName>
        <fullName evidence="11">Glutathione-dependent peroxiredoxin</fullName>
    </alternativeName>
    <alternativeName>
        <fullName evidence="10">Lysophosphatidylcholine acyltransferase 5</fullName>
        <shortName>LPC acyltransferase 5</shortName>
        <shortName>LPCAT-5</shortName>
        <shortName>Lyso-PC acyltransferase 5</shortName>
        <ecNumber evidence="8">2.3.1.23</ecNumber>
    </alternativeName>
    <alternativeName>
        <fullName>Non-selenium glutathione peroxidase</fullName>
        <shortName>NSGPx</shortName>
    </alternativeName>
    <alternativeName>
        <fullName>Thiol-specific antioxidant protein</fullName>
    </alternativeName>
</protein>
<accession>O35244</accession>
<keyword id="KW-0007">Acetylation</keyword>
<keyword id="KW-0049">Antioxidant</keyword>
<keyword id="KW-0963">Cytoplasm</keyword>
<keyword id="KW-0903">Direct protein sequencing</keyword>
<keyword id="KW-0378">Hydrolase</keyword>
<keyword id="KW-0442">Lipid degradation</keyword>
<keyword id="KW-0443">Lipid metabolism</keyword>
<keyword id="KW-0458">Lysosome</keyword>
<keyword id="KW-0511">Multifunctional enzyme</keyword>
<keyword id="KW-0560">Oxidoreductase</keyword>
<keyword id="KW-0575">Peroxidase</keyword>
<keyword id="KW-0597">Phosphoprotein</keyword>
<keyword id="KW-0676">Redox-active center</keyword>
<keyword id="KW-1185">Reference proteome</keyword>
<keyword id="KW-0808">Transferase</keyword>
<comment type="function">
    <text evidence="2 4 5 8 9">Thiol-specific peroxidase that catalyzes the reduction of hydrogen peroxide and organic hydroperoxides to water and alcohols, respectively (PubMed:15004285). Can reduce H(2)O(2) and short chain organic, fatty acid, and phospholipid hydroperoxides (By similarity). Also has phospholipase activity, can therefore either reduce the oxidized sn-2 fatty acyl group of phospholipids (peroxidase activity) or hydrolyze the sn-2 ester bond of phospholipids (phospholipase activity) (PubMed:15004285, PubMed:17652308, PubMed:8999971). These activities are dependent on binding to phospholipids at acidic pH and to oxidized phospholipds at cytosolic pH (By similarity). Plays a role in cell protection against oxidative stress by detoxifying peroxides and in phospholipid homeostasis (By similarity). Exhibits acyl-CoA-dependent lysophospholipid acyltransferase which mediates the conversion of lysophosphatidylcholine (1-acyl-sn-glycero-3-phosphocholine or LPC) into phosphatidylcholine (1,2-diacyl-sn-glycero-3-phosphocholine or PC) (PubMed:26830860). Shows a clear preference for LPC as the lysophospholipid and for palmitoyl CoA as the fatty acyl substrate (By similarity).</text>
</comment>
<comment type="catalytic activity">
    <reaction evidence="4">
        <text>a hydroperoxide + 2 glutathione = an alcohol + glutathione disulfide + H2O</text>
        <dbReference type="Rhea" id="RHEA:62632"/>
        <dbReference type="ChEBI" id="CHEBI:15377"/>
        <dbReference type="ChEBI" id="CHEBI:30879"/>
        <dbReference type="ChEBI" id="CHEBI:35924"/>
        <dbReference type="ChEBI" id="CHEBI:57925"/>
        <dbReference type="ChEBI" id="CHEBI:58297"/>
        <dbReference type="EC" id="1.11.1.27"/>
    </reaction>
</comment>
<comment type="catalytic activity">
    <reaction evidence="5 9">
        <text>a 1,2-diacyl-sn-glycero-3-phosphocholine + H2O = a 1-acyl-sn-glycero-3-phosphocholine + a fatty acid + H(+)</text>
        <dbReference type="Rhea" id="RHEA:15801"/>
        <dbReference type="ChEBI" id="CHEBI:15377"/>
        <dbReference type="ChEBI" id="CHEBI:15378"/>
        <dbReference type="ChEBI" id="CHEBI:28868"/>
        <dbReference type="ChEBI" id="CHEBI:57643"/>
        <dbReference type="ChEBI" id="CHEBI:58168"/>
        <dbReference type="EC" id="3.1.1.4"/>
    </reaction>
</comment>
<comment type="catalytic activity">
    <reaction evidence="8">
        <text>a 1-acyl-sn-glycero-3-phosphocholine + an acyl-CoA = a 1,2-diacyl-sn-glycero-3-phosphocholine + CoA</text>
        <dbReference type="Rhea" id="RHEA:12937"/>
        <dbReference type="ChEBI" id="CHEBI:57287"/>
        <dbReference type="ChEBI" id="CHEBI:57643"/>
        <dbReference type="ChEBI" id="CHEBI:58168"/>
        <dbReference type="ChEBI" id="CHEBI:58342"/>
        <dbReference type="EC" id="2.3.1.23"/>
    </reaction>
</comment>
<comment type="catalytic activity">
    <reaction evidence="2">
        <text>1-hexadecanoyl-sn-glycero-3-phosphocholine + hexadecanoyl-CoA = 1,2-dihexadecanoyl-sn-glycero-3-phosphocholine + CoA</text>
        <dbReference type="Rhea" id="RHEA:35983"/>
        <dbReference type="ChEBI" id="CHEBI:57287"/>
        <dbReference type="ChEBI" id="CHEBI:57379"/>
        <dbReference type="ChEBI" id="CHEBI:72998"/>
        <dbReference type="ChEBI" id="CHEBI:72999"/>
    </reaction>
    <physiologicalReaction direction="left-to-right" evidence="2">
        <dbReference type="Rhea" id="RHEA:35984"/>
    </physiologicalReaction>
</comment>
<comment type="catalytic activity">
    <reaction evidence="2">
        <text>1,2-dihexadecanoyl-sn-glycero-3-phosphocholine + H2O = 1-hexadecanoyl-sn-glycero-3-phosphocholine + hexadecanoate + H(+)</text>
        <dbReference type="Rhea" id="RHEA:41223"/>
        <dbReference type="ChEBI" id="CHEBI:7896"/>
        <dbReference type="ChEBI" id="CHEBI:15377"/>
        <dbReference type="ChEBI" id="CHEBI:15378"/>
        <dbReference type="ChEBI" id="CHEBI:72998"/>
        <dbReference type="ChEBI" id="CHEBI:72999"/>
    </reaction>
    <physiologicalReaction direction="left-to-right" evidence="2">
        <dbReference type="Rhea" id="RHEA:41224"/>
    </physiologicalReaction>
</comment>
<comment type="biophysicochemical properties">
    <kinetics>
        <KM evidence="9">0.25 mM for dipalmitoyl phosphatidylcholine</KM>
        <Vmax evidence="9">1.89 nmol/h/mg enzyme for dipalmitoyl phosphatidylcholine</Vmax>
    </kinetics>
    <phDependence>
        <text evidence="9">Optimum pH is 4 (for phospholipase activity).</text>
    </phDependence>
</comment>
<comment type="subunit">
    <text evidence="1 2 12">Homodimer (By similarity). Interacts with GSTP1; mediates PRDX6 glutathionylation and regeneration (Probable). Interacts with APEX1. Interacts with STH. May interact with FAM168B (By similarity). May interact with HTR2A (By similarity).</text>
</comment>
<comment type="interaction">
    <interactant intactId="EBI-915490">
        <id>O35244</id>
    </interactant>
    <interactant intactId="EBI-356480">
        <id>P62259</id>
        <label>Ywhae</label>
    </interactant>
    <organismsDiffer>true</organismsDiffer>
    <experiments>2</experiments>
</comment>
<comment type="subcellular location">
    <subcellularLocation>
        <location evidence="7">Cytoplasm</location>
    </subcellularLocation>
    <subcellularLocation>
        <location evidence="7">Lysosome</location>
    </subcellularLocation>
    <text evidence="7">Also found in lung secretory organelles (lamellar bodies).</text>
</comment>
<comment type="PTM">
    <text evidence="6 8">Phosphorylation at Thr-177 by MAP kinases increases the phospholipase activity of the enzyme (PubMed:19140803). Phosphorylated form exhibits a greater lysophosphatidylcholine acyltransferase activity compared to the non-phosphorylated form (PubMed:26830860).</text>
</comment>
<comment type="PTM">
    <text evidence="2">Irreversibly inactivated by overoxidation of Cys-47 to sulfinic acid (Cys-SO(2)H) and sulfonic acid (Cys-SO(3)H) forms upon oxidative stress.</text>
</comment>
<comment type="miscellaneous">
    <text evidence="12">The active site is a conserved redox-active cysteine residue, the peroxidatic cysteine (C(P)), which makes the nucleophilic attack on the peroxide substrate. The peroxide oxidizes the C(P)-SH to cysteine sulfenic acid (C(P)-SOH), which then reacts with another cysteine residue, the resolving cysteine (C(R)), to form a disulfide bridge. The disulfide is subsequently reduced by an appropriate electron donor to complete the catalytic cycle. In this 1-Cys peroxiredoxin, no C(R) is present and C(P) instead forms a disulfide with a cysteine from another protein or with a small thiol molecule. C(P) is reactivated by glutathionylation mediated by glutathione S-transferase Pi, followed by spontaneous reduction of the enzyme with glutathione.</text>
</comment>
<comment type="similarity">
    <text evidence="11">Belongs to the peroxiredoxin family. Prx6 subfamily.</text>
</comment>
<gene>
    <name type="primary">Prdx6</name>
    <name type="synonym">Aipla2</name>
    <name type="synonym">Aop2</name>
    <name type="synonym">Tsa</name>
</gene>
<feature type="initiator methionine" description="Removed" evidence="2">
    <location>
        <position position="1"/>
    </location>
</feature>
<feature type="chain" id="PRO_0000135104" description="Peroxiredoxin-6">
    <location>
        <begin position="2"/>
        <end position="224"/>
    </location>
</feature>
<feature type="domain" description="Thioredoxin" evidence="3">
    <location>
        <begin position="5"/>
        <end position="169"/>
    </location>
</feature>
<feature type="region of interest" description="Required and sufficient for targeting to lysosomes and lamellar bodies" evidence="7">
    <location>
        <begin position="31"/>
        <end position="40"/>
    </location>
</feature>
<feature type="active site" description="Cysteine sulfenic acid (-SOH) intermediate; for peroxidase activity" evidence="5">
    <location>
        <position position="47"/>
    </location>
</feature>
<feature type="active site" description="For phospholipase activity" evidence="13">
    <location>
        <position position="140"/>
    </location>
</feature>
<feature type="site" description="Important for phospholipase activity" evidence="13">
    <location>
        <position position="32"/>
    </location>
</feature>
<feature type="modified residue" description="Phosphothreonine" evidence="2">
    <location>
        <position position="44"/>
    </location>
</feature>
<feature type="modified residue" description="N6-acetyllysine" evidence="2">
    <location>
        <position position="63"/>
    </location>
</feature>
<feature type="modified residue" description="Phosphotyrosine" evidence="2">
    <location>
        <position position="89"/>
    </location>
</feature>
<feature type="modified residue" description="Phosphothreonine; by MAPK" evidence="6">
    <location>
        <position position="177"/>
    </location>
</feature>
<feature type="modified residue" description="N6-acetyllysine; alternate" evidence="2">
    <location>
        <position position="209"/>
    </location>
</feature>
<feature type="modified residue" description="N6-succinyllysine; alternate" evidence="1">
    <location>
        <position position="209"/>
    </location>
</feature>
<feature type="mutagenesis site" description="Abolishes lipid binding." evidence="5">
    <original>H</original>
    <variation>A</variation>
    <location>
        <position position="26"/>
    </location>
</feature>
<feature type="mutagenesis site" description="Abolishes lipid binding." evidence="5">
    <original>S</original>
    <variation>A</variation>
    <location>
        <position position="32"/>
    </location>
</feature>
<feature type="mutagenesis site" description="Abolishes phospholipase activity, but does not impair lipid binding." evidence="5">
    <original>D</original>
    <variation>A</variation>
    <location>
        <position position="140"/>
    </location>
</feature>
<proteinExistence type="evidence at protein level"/>
<organism>
    <name type="scientific">Rattus norvegicus</name>
    <name type="common">Rat</name>
    <dbReference type="NCBI Taxonomy" id="10116"/>
    <lineage>
        <taxon>Eukaryota</taxon>
        <taxon>Metazoa</taxon>
        <taxon>Chordata</taxon>
        <taxon>Craniata</taxon>
        <taxon>Vertebrata</taxon>
        <taxon>Euteleostomi</taxon>
        <taxon>Mammalia</taxon>
        <taxon>Eutheria</taxon>
        <taxon>Euarchontoglires</taxon>
        <taxon>Glires</taxon>
        <taxon>Rodentia</taxon>
        <taxon>Myomorpha</taxon>
        <taxon>Muroidea</taxon>
        <taxon>Muridae</taxon>
        <taxon>Murinae</taxon>
        <taxon>Rattus</taxon>
    </lineage>
</organism>
<sequence>MPGGLLLGDEAPNFEANTTIGHIRFHDFLGDSWGILFSHPRDFTPVCTTELGRAAKLAPEFAKRNVKLIALSIDSVEDHFAWSKDINAYNGAAPTEKLPFPIIDDKDRDLAILLGMLDPAEKDEKGMPVTARVVFIFGPDKKLKLSILYPATTGRNFDEILRVVDSLQLTASNPVATPVDWKKGESVMVLPTLPEEEAKQLFPKGVFTKELPSGKKYLRYTPQP</sequence>
<name>PRDX6_RAT</name>
<dbReference type="EC" id="1.11.1.27" evidence="4"/>
<dbReference type="EC" id="3.1.1.4" evidence="5 9"/>
<dbReference type="EC" id="2.3.1.23" evidence="8"/>
<dbReference type="EMBL" id="AF014009">
    <property type="protein sequence ID" value="AAB66341.1"/>
    <property type="molecule type" value="mRNA"/>
</dbReference>
<dbReference type="EMBL" id="Y17295">
    <property type="protein sequence ID" value="CAA76732.1"/>
    <property type="molecule type" value="mRNA"/>
</dbReference>
<dbReference type="RefSeq" id="NP_446028.1">
    <property type="nucleotide sequence ID" value="NM_053576.2"/>
</dbReference>
<dbReference type="SMR" id="O35244"/>
<dbReference type="BioGRID" id="250165">
    <property type="interactions" value="4"/>
</dbReference>
<dbReference type="FunCoup" id="O35244">
    <property type="interactions" value="974"/>
</dbReference>
<dbReference type="IntAct" id="O35244">
    <property type="interactions" value="6"/>
</dbReference>
<dbReference type="MINT" id="O35244"/>
<dbReference type="STRING" id="10116.ENSRNOP00000030323"/>
<dbReference type="MoonProt" id="O35244"/>
<dbReference type="PeroxiBase" id="4427">
    <property type="entry name" value="Rno1CysPrx"/>
</dbReference>
<dbReference type="GlyGen" id="O35244">
    <property type="glycosylation" value="1 site, 1 O-linked glycan (1 site)"/>
</dbReference>
<dbReference type="iPTMnet" id="O35244"/>
<dbReference type="PhosphoSitePlus" id="O35244"/>
<dbReference type="SwissPalm" id="O35244"/>
<dbReference type="jPOST" id="O35244"/>
<dbReference type="PaxDb" id="10116-ENSRNOP00000030323"/>
<dbReference type="GeneID" id="94167"/>
<dbReference type="KEGG" id="rno:94167"/>
<dbReference type="UCSC" id="RGD:71005">
    <property type="organism name" value="rat"/>
</dbReference>
<dbReference type="AGR" id="RGD:71005"/>
<dbReference type="CTD" id="9588"/>
<dbReference type="RGD" id="71005">
    <property type="gene designation" value="Prdx6"/>
</dbReference>
<dbReference type="eggNOG" id="KOG0854">
    <property type="taxonomic scope" value="Eukaryota"/>
</dbReference>
<dbReference type="HOGENOM" id="CLU_042529_4_1_1"/>
<dbReference type="InParanoid" id="O35244"/>
<dbReference type="OrthoDB" id="4715at9989"/>
<dbReference type="PhylomeDB" id="O35244"/>
<dbReference type="TreeFam" id="TF105183"/>
<dbReference type="BRENDA" id="1.11.1.27">
    <property type="organism ID" value="5301"/>
</dbReference>
<dbReference type="BRENDA" id="2.3.1.23">
    <property type="organism ID" value="5301"/>
</dbReference>
<dbReference type="BRENDA" id="3.1.1.4">
    <property type="organism ID" value="5301"/>
</dbReference>
<dbReference type="Reactome" id="R-RNO-3299685">
    <property type="pathway name" value="Detoxification of Reactive Oxygen Species"/>
</dbReference>
<dbReference type="Reactome" id="R-RNO-6798695">
    <property type="pathway name" value="Neutrophil degranulation"/>
</dbReference>
<dbReference type="PRO" id="PR:O35244"/>
<dbReference type="Proteomes" id="UP000002494">
    <property type="component" value="Chromosome 13"/>
</dbReference>
<dbReference type="Bgee" id="ENSRNOG00000002896">
    <property type="expression patterns" value="Expressed in lung and 19 other cell types or tissues"/>
</dbReference>
<dbReference type="GO" id="GO:0005737">
    <property type="term" value="C:cytoplasm"/>
    <property type="evidence" value="ECO:0000250"/>
    <property type="project" value="UniProtKB"/>
</dbReference>
<dbReference type="GO" id="GO:0005829">
    <property type="term" value="C:cytosol"/>
    <property type="evidence" value="ECO:0000266"/>
    <property type="project" value="RGD"/>
</dbReference>
<dbReference type="GO" id="GO:0005764">
    <property type="term" value="C:lysosome"/>
    <property type="evidence" value="ECO:0007669"/>
    <property type="project" value="UniProtKB-SubCell"/>
</dbReference>
<dbReference type="GO" id="GO:0005634">
    <property type="term" value="C:nucleus"/>
    <property type="evidence" value="ECO:0000266"/>
    <property type="project" value="RGD"/>
</dbReference>
<dbReference type="GO" id="GO:0048471">
    <property type="term" value="C:perinuclear region of cytoplasm"/>
    <property type="evidence" value="ECO:0000266"/>
    <property type="project" value="RGD"/>
</dbReference>
<dbReference type="GO" id="GO:0047184">
    <property type="term" value="F:1-acylglycerophosphocholine O-acyltransferase activity"/>
    <property type="evidence" value="ECO:0000314"/>
    <property type="project" value="UniProtKB"/>
</dbReference>
<dbReference type="GO" id="GO:0047499">
    <property type="term" value="F:calcium-independent phospholipase A2 activity"/>
    <property type="evidence" value="ECO:0000266"/>
    <property type="project" value="RGD"/>
</dbReference>
<dbReference type="GO" id="GO:0004602">
    <property type="term" value="F:glutathione peroxidase activity"/>
    <property type="evidence" value="ECO:0000314"/>
    <property type="project" value="RGD"/>
</dbReference>
<dbReference type="GO" id="GO:0042802">
    <property type="term" value="F:identical protein binding"/>
    <property type="evidence" value="ECO:0000266"/>
    <property type="project" value="RGD"/>
</dbReference>
<dbReference type="GO" id="GO:0004601">
    <property type="term" value="F:peroxidase activity"/>
    <property type="evidence" value="ECO:0000266"/>
    <property type="project" value="RGD"/>
</dbReference>
<dbReference type="GO" id="GO:0051920">
    <property type="term" value="F:peroxiredoxin activity"/>
    <property type="evidence" value="ECO:0007669"/>
    <property type="project" value="InterPro"/>
</dbReference>
<dbReference type="GO" id="GO:0004623">
    <property type="term" value="F:phospholipase A2 activity"/>
    <property type="evidence" value="ECO:0000266"/>
    <property type="project" value="RGD"/>
</dbReference>
<dbReference type="GO" id="GO:0031625">
    <property type="term" value="F:ubiquitin protein ligase binding"/>
    <property type="evidence" value="ECO:0000266"/>
    <property type="project" value="RGD"/>
</dbReference>
<dbReference type="GO" id="GO:0032060">
    <property type="term" value="P:bleb assembly"/>
    <property type="evidence" value="ECO:0000266"/>
    <property type="project" value="RGD"/>
</dbReference>
<dbReference type="GO" id="GO:0045454">
    <property type="term" value="P:cell redox homeostasis"/>
    <property type="evidence" value="ECO:0000318"/>
    <property type="project" value="GO_Central"/>
</dbReference>
<dbReference type="GO" id="GO:0098869">
    <property type="term" value="P:cellular oxidant detoxification"/>
    <property type="evidence" value="ECO:0000266"/>
    <property type="project" value="RGD"/>
</dbReference>
<dbReference type="GO" id="GO:0046475">
    <property type="term" value="P:glycerophospholipid catabolic process"/>
    <property type="evidence" value="ECO:0000266"/>
    <property type="project" value="RGD"/>
</dbReference>
<dbReference type="GO" id="GO:0042744">
    <property type="term" value="P:hydrogen peroxide catabolic process"/>
    <property type="evidence" value="ECO:0000314"/>
    <property type="project" value="RGD"/>
</dbReference>
<dbReference type="GO" id="GO:0048026">
    <property type="term" value="P:positive regulation of mRNA splicing, via spliceosome"/>
    <property type="evidence" value="ECO:0000266"/>
    <property type="project" value="RGD"/>
</dbReference>
<dbReference type="GO" id="GO:0006979">
    <property type="term" value="P:response to oxidative stress"/>
    <property type="evidence" value="ECO:0000266"/>
    <property type="project" value="RGD"/>
</dbReference>
<dbReference type="GO" id="GO:0000302">
    <property type="term" value="P:response to reactive oxygen species"/>
    <property type="evidence" value="ECO:0000266"/>
    <property type="project" value="RGD"/>
</dbReference>
<dbReference type="CDD" id="cd03016">
    <property type="entry name" value="PRX_1cys"/>
    <property type="match status" value="1"/>
</dbReference>
<dbReference type="FunFam" id="3.30.1020.10:FF:000001">
    <property type="entry name" value="1-Cys peroxiredoxin"/>
    <property type="match status" value="1"/>
</dbReference>
<dbReference type="FunFam" id="3.40.30.10:FF:000011">
    <property type="entry name" value="Peroxiredoxin PRX1"/>
    <property type="match status" value="1"/>
</dbReference>
<dbReference type="Gene3D" id="3.30.1020.10">
    <property type="entry name" value="Antioxidant, Horf6, Chain A, domain2"/>
    <property type="match status" value="1"/>
</dbReference>
<dbReference type="Gene3D" id="3.40.30.10">
    <property type="entry name" value="Glutaredoxin"/>
    <property type="match status" value="1"/>
</dbReference>
<dbReference type="InterPro" id="IPR000866">
    <property type="entry name" value="AhpC/TSA"/>
</dbReference>
<dbReference type="InterPro" id="IPR024706">
    <property type="entry name" value="Peroxiredoxin_AhpC-typ"/>
</dbReference>
<dbReference type="InterPro" id="IPR019479">
    <property type="entry name" value="Peroxiredoxin_C"/>
</dbReference>
<dbReference type="InterPro" id="IPR045020">
    <property type="entry name" value="PRX_1cys"/>
</dbReference>
<dbReference type="InterPro" id="IPR036249">
    <property type="entry name" value="Thioredoxin-like_sf"/>
</dbReference>
<dbReference type="InterPro" id="IPR013766">
    <property type="entry name" value="Thioredoxin_domain"/>
</dbReference>
<dbReference type="PANTHER" id="PTHR43503">
    <property type="entry name" value="MCG48959-RELATED"/>
    <property type="match status" value="1"/>
</dbReference>
<dbReference type="PANTHER" id="PTHR43503:SF4">
    <property type="entry name" value="PEROXIREDOXIN-6"/>
    <property type="match status" value="1"/>
</dbReference>
<dbReference type="Pfam" id="PF10417">
    <property type="entry name" value="1-cysPrx_C"/>
    <property type="match status" value="1"/>
</dbReference>
<dbReference type="Pfam" id="PF00578">
    <property type="entry name" value="AhpC-TSA"/>
    <property type="match status" value="1"/>
</dbReference>
<dbReference type="PIRSF" id="PIRSF000239">
    <property type="entry name" value="AHPC"/>
    <property type="match status" value="1"/>
</dbReference>
<dbReference type="SUPFAM" id="SSF52833">
    <property type="entry name" value="Thioredoxin-like"/>
    <property type="match status" value="1"/>
</dbReference>
<dbReference type="PROSITE" id="PS51352">
    <property type="entry name" value="THIOREDOXIN_2"/>
    <property type="match status" value="1"/>
</dbReference>
<reference key="1">
    <citation type="submission" date="1997-07" db="EMBL/GenBank/DDBJ databases">
        <authorList>
            <person name="Kim T.-S."/>
            <person name="Feinstein S.I."/>
            <person name="Dodia C."/>
            <person name="Hennigan B.B."/>
            <person name="Fisher A.B."/>
        </authorList>
    </citation>
    <scope>NUCLEOTIDE SEQUENCE [MRNA]</scope>
    <source>
        <strain>Sprague-Dawley</strain>
        <tissue>Lung</tissue>
    </source>
</reference>
<reference key="2">
    <citation type="submission" date="1998-05" db="EMBL/GenBank/DDBJ databases">
        <authorList>
            <person name="Andreeva S."/>
        </authorList>
    </citation>
    <scope>NUCLEOTIDE SEQUENCE [MRNA]</scope>
    <source>
        <strain>Wistar</strain>
        <tissue>Olfactory epithelium</tissue>
    </source>
</reference>
<reference key="3">
    <citation type="submission" date="2007-04" db="UniProtKB">
        <authorList>
            <person name="Lubec G."/>
            <person name="Afjehi-Sadat L."/>
            <person name="Chen W.-Q."/>
        </authorList>
    </citation>
    <scope>PROTEIN SEQUENCE OF 2-41; 57-84; 98-118; 133-142; 156-162 AND 183-199</scope>
    <scope>IDENTIFICATION BY MASS SPECTROMETRY</scope>
    <source>
        <strain>Sprague-Dawley</strain>
        <tissue>Hippocampus</tissue>
        <tissue>Spinal cord</tissue>
    </source>
</reference>
<reference key="4">
    <citation type="journal article" date="1997" name="J. Biol. Chem.">
        <title>Identification of a human cDNA clone for lysosomal type Ca2+-independent phospholipase A2 and properties of the expressed protein.</title>
        <authorList>
            <person name="Kim T.-S."/>
            <person name="Sundaresh C.S."/>
            <person name="Feinstein S.I."/>
            <person name="Dodia C."/>
            <person name="Skach W.R."/>
            <person name="Jain M.K."/>
            <person name="Nagase T."/>
            <person name="Seki N."/>
            <person name="Ishikawa K."/>
            <person name="Nomura N."/>
            <person name="Fisher A.B."/>
        </authorList>
    </citation>
    <scope>PROTEIN SEQUENCE OF 26-42 AND 146-163</scope>
    <scope>FUNCTION</scope>
    <scope>CATALYTIC ACTIVITY</scope>
    <scope>BIOPHYSICOCHEMICAL PROPERTIES</scope>
</reference>
<reference key="5">
    <citation type="journal article" date="1997" name="J. Biol. Chem.">
        <authorList>
            <person name="Kim T.-S."/>
            <person name="Sundaresh C.S."/>
            <person name="Feinstein S.I."/>
            <person name="Dodia C."/>
            <person name="Skach W.R."/>
            <person name="Jain M.K."/>
            <person name="Nagase T."/>
            <person name="Seki N."/>
            <person name="Ishikawa K."/>
            <person name="Nomura N."/>
            <person name="Fisher A.B."/>
        </authorList>
    </citation>
    <scope>ERRATUM OF PUBMED:8999971</scope>
</reference>
<reference key="6">
    <citation type="journal article" date="2004" name="Proc. Natl. Acad. Sci. U.S.A.">
        <title>Activation of the antioxidant enzyme 1-CYS peroxiredoxin requires glutathionylation mediated by heterodimerization with pi GST.</title>
        <authorList>
            <person name="Manevich Y."/>
            <person name="Feinstein S.I."/>
            <person name="Fisher A.B."/>
        </authorList>
    </citation>
    <scope>FUNCTION</scope>
    <scope>CATALYTIC ACTIVITY</scope>
    <scope>ACTIVATION BY GLUTATHIONE</scope>
</reference>
<reference key="7">
    <citation type="journal article" date="2007" name="J. Lipid Res.">
        <title>Structure and phospholipase function of peroxiredoxin 6: identification of the catalytic triad and its role in phospholipid substrate binding.</title>
        <authorList>
            <person name="Manevich Y."/>
            <person name="Reddy K.S."/>
            <person name="Shuvaeva T."/>
            <person name="Feinstein S.I."/>
            <person name="Fisher A.B."/>
        </authorList>
    </citation>
    <scope>FUNCTION</scope>
    <scope>CATALYTIC ACTIVITY</scope>
    <scope>ACTIVE SITE</scope>
    <scope>MUTAGENESIS OF HIS-26; SER-32 AND ASP-140</scope>
</reference>
<reference key="8">
    <citation type="journal article" date="2009" name="Am. J. Physiol.">
        <title>Identification of the amino acid sequence that targets peroxiredoxin 6 to lysosome-like structures of lung epithelial cells.</title>
        <authorList>
            <person name="Sorokina E.M."/>
            <person name="Feinstein S.I."/>
            <person name="Milovanova T.N."/>
            <person name="Fisher A.B."/>
        </authorList>
    </citation>
    <scope>SUBCELLULAR LOCATION</scope>
</reference>
<reference key="9">
    <citation type="journal article" date="2009" name="Biochem. J.">
        <title>Mitogen-activated protein kinase-mediated phosphorylation of peroxiredoxin 6 regulates its phospholipase A(2) activity.</title>
        <authorList>
            <person name="Wu Y."/>
            <person name="Feinstein S.I."/>
            <person name="Manevich Y."/>
            <person name="Chowdhury I."/>
            <person name="Pak J.H."/>
            <person name="Kazi A."/>
            <person name="Dodia C."/>
            <person name="Speicher D.W."/>
            <person name="Fisher A.B."/>
        </authorList>
    </citation>
    <scope>PHOSPHORYLATION AT THR-177 BY MAPK</scope>
</reference>
<reference key="10">
    <citation type="journal article" date="2016" name="J. Lipid Res.">
        <title>A novel lysophosphatidylcholine acyl transferase activity is expressed by peroxiredoxin 6.</title>
        <authorList>
            <person name="Fisher A.B."/>
            <person name="Dodia C."/>
            <person name="Sorokina E.M."/>
            <person name="Li H."/>
            <person name="Zhou S."/>
            <person name="Raabe T."/>
            <person name="Feinstein S.I."/>
        </authorList>
    </citation>
    <scope>FUNCTION</scope>
    <scope>CATALYTIC ACTIVITY</scope>
    <scope>PHOSPHORYLATION</scope>
</reference>
<evidence type="ECO:0000250" key="1">
    <source>
        <dbReference type="UniProtKB" id="O08709"/>
    </source>
</evidence>
<evidence type="ECO:0000250" key="2">
    <source>
        <dbReference type="UniProtKB" id="P30041"/>
    </source>
</evidence>
<evidence type="ECO:0000255" key="3">
    <source>
        <dbReference type="PROSITE-ProRule" id="PRU00691"/>
    </source>
</evidence>
<evidence type="ECO:0000269" key="4">
    <source>
    </source>
</evidence>
<evidence type="ECO:0000269" key="5">
    <source>
    </source>
</evidence>
<evidence type="ECO:0000269" key="6">
    <source>
    </source>
</evidence>
<evidence type="ECO:0000269" key="7">
    <source>
    </source>
</evidence>
<evidence type="ECO:0000269" key="8">
    <source>
    </source>
</evidence>
<evidence type="ECO:0000269" key="9">
    <source>
    </source>
</evidence>
<evidence type="ECO:0000303" key="10">
    <source>
    </source>
</evidence>
<evidence type="ECO:0000305" key="11"/>
<evidence type="ECO:0000305" key="12">
    <source>
    </source>
</evidence>
<evidence type="ECO:0000305" key="13">
    <source>
    </source>
</evidence>